<keyword id="KW-0997">Cell inner membrane</keyword>
<keyword id="KW-1003">Cell membrane</keyword>
<keyword id="KW-0169">Cobalamin biosynthesis</keyword>
<keyword id="KW-0460">Magnesium</keyword>
<keyword id="KW-0472">Membrane</keyword>
<keyword id="KW-0808">Transferase</keyword>
<keyword id="KW-0812">Transmembrane</keyword>
<keyword id="KW-1133">Transmembrane helix</keyword>
<name>COBS_ACIBC</name>
<proteinExistence type="inferred from homology"/>
<sequence>MAPFWIALQFLTILPIELKTIPTAQQNGRAILFYPLVGLIIGGILFLVTCIFVKLPALLLAAIVFALWIWLTGGLHLDGLADTADAWVGGFGDKLRTLQIMKDPSCGPIGVLSIVIVCLLKFALIYVLIEQHQSLFLICIPILGRVVPSILFLTTPYVREKGLGRSLTDHLPKTASWIITGFVLLLPLYWEWQGLIAIISFLISLVYLRHVFIKRIGGITGDTVGAAIEIGETVLIFTFVVSYFYLV</sequence>
<feature type="chain" id="PRO_1000132556" description="Adenosylcobinamide-GDP ribazoletransferase">
    <location>
        <begin position="1"/>
        <end position="247"/>
    </location>
</feature>
<feature type="transmembrane region" description="Helical" evidence="1">
    <location>
        <begin position="31"/>
        <end position="51"/>
    </location>
</feature>
<feature type="transmembrane region" description="Helical" evidence="1">
    <location>
        <begin position="55"/>
        <end position="75"/>
    </location>
</feature>
<feature type="transmembrane region" description="Helical" evidence="1">
    <location>
        <begin position="109"/>
        <end position="129"/>
    </location>
</feature>
<feature type="transmembrane region" description="Helical" evidence="1">
    <location>
        <begin position="135"/>
        <end position="155"/>
    </location>
</feature>
<feature type="transmembrane region" description="Helical" evidence="1">
    <location>
        <begin position="183"/>
        <end position="203"/>
    </location>
</feature>
<feature type="transmembrane region" description="Helical" evidence="1">
    <location>
        <begin position="227"/>
        <end position="247"/>
    </location>
</feature>
<organism>
    <name type="scientific">Acinetobacter baumannii (strain ACICU)</name>
    <dbReference type="NCBI Taxonomy" id="405416"/>
    <lineage>
        <taxon>Bacteria</taxon>
        <taxon>Pseudomonadati</taxon>
        <taxon>Pseudomonadota</taxon>
        <taxon>Gammaproteobacteria</taxon>
        <taxon>Moraxellales</taxon>
        <taxon>Moraxellaceae</taxon>
        <taxon>Acinetobacter</taxon>
        <taxon>Acinetobacter calcoaceticus/baumannii complex</taxon>
    </lineage>
</organism>
<evidence type="ECO:0000255" key="1">
    <source>
        <dbReference type="HAMAP-Rule" id="MF_00719"/>
    </source>
</evidence>
<protein>
    <recommendedName>
        <fullName evidence="1">Adenosylcobinamide-GDP ribazoletransferase</fullName>
        <ecNumber evidence="1">2.7.8.26</ecNumber>
    </recommendedName>
    <alternativeName>
        <fullName evidence="1">Cobalamin synthase</fullName>
    </alternativeName>
    <alternativeName>
        <fullName evidence="1">Cobalamin-5'-phosphate synthase</fullName>
    </alternativeName>
</protein>
<comment type="function">
    <text evidence="1">Joins adenosylcobinamide-GDP and alpha-ribazole to generate adenosylcobalamin (Ado-cobalamin). Also synthesizes adenosylcobalamin 5'-phosphate from adenosylcobinamide-GDP and alpha-ribazole 5'-phosphate.</text>
</comment>
<comment type="catalytic activity">
    <reaction evidence="1">
        <text>alpha-ribazole + adenosylcob(III)inamide-GDP = adenosylcob(III)alamin + GMP + H(+)</text>
        <dbReference type="Rhea" id="RHEA:16049"/>
        <dbReference type="ChEBI" id="CHEBI:10329"/>
        <dbReference type="ChEBI" id="CHEBI:15378"/>
        <dbReference type="ChEBI" id="CHEBI:18408"/>
        <dbReference type="ChEBI" id="CHEBI:58115"/>
        <dbReference type="ChEBI" id="CHEBI:60487"/>
        <dbReference type="EC" id="2.7.8.26"/>
    </reaction>
</comment>
<comment type="catalytic activity">
    <reaction evidence="1">
        <text>alpha-ribazole 5'-phosphate + adenosylcob(III)inamide-GDP = adenosylcob(III)alamin 5'-phosphate + GMP + H(+)</text>
        <dbReference type="Rhea" id="RHEA:23560"/>
        <dbReference type="ChEBI" id="CHEBI:15378"/>
        <dbReference type="ChEBI" id="CHEBI:57918"/>
        <dbReference type="ChEBI" id="CHEBI:58115"/>
        <dbReference type="ChEBI" id="CHEBI:60487"/>
        <dbReference type="ChEBI" id="CHEBI:60493"/>
        <dbReference type="EC" id="2.7.8.26"/>
    </reaction>
</comment>
<comment type="cofactor">
    <cofactor evidence="1">
        <name>Mg(2+)</name>
        <dbReference type="ChEBI" id="CHEBI:18420"/>
    </cofactor>
</comment>
<comment type="pathway">
    <text evidence="1">Cofactor biosynthesis; adenosylcobalamin biosynthesis; adenosylcobalamin from cob(II)yrinate a,c-diamide: step 7/7.</text>
</comment>
<comment type="subcellular location">
    <subcellularLocation>
        <location evidence="1">Cell inner membrane</location>
        <topology evidence="1">Multi-pass membrane protein</topology>
    </subcellularLocation>
</comment>
<comment type="similarity">
    <text evidence="1">Belongs to the CobS family.</text>
</comment>
<dbReference type="EC" id="2.7.8.26" evidence="1"/>
<dbReference type="EMBL" id="CP000863">
    <property type="protein sequence ID" value="ACC57002.1"/>
    <property type="molecule type" value="Genomic_DNA"/>
</dbReference>
<dbReference type="RefSeq" id="WP_000035228.1">
    <property type="nucleotide sequence ID" value="NZ_CP031380.1"/>
</dbReference>
<dbReference type="KEGG" id="abc:ACICU_01690"/>
<dbReference type="HOGENOM" id="CLU_057426_3_1_6"/>
<dbReference type="UniPathway" id="UPA00148">
    <property type="reaction ID" value="UER00238"/>
</dbReference>
<dbReference type="Proteomes" id="UP000008839">
    <property type="component" value="Chromosome"/>
</dbReference>
<dbReference type="GO" id="GO:0005886">
    <property type="term" value="C:plasma membrane"/>
    <property type="evidence" value="ECO:0007669"/>
    <property type="project" value="UniProtKB-SubCell"/>
</dbReference>
<dbReference type="GO" id="GO:0051073">
    <property type="term" value="F:adenosylcobinamide-GDP ribazoletransferase activity"/>
    <property type="evidence" value="ECO:0007669"/>
    <property type="project" value="UniProtKB-UniRule"/>
</dbReference>
<dbReference type="GO" id="GO:0008818">
    <property type="term" value="F:cobalamin 5'-phosphate synthase activity"/>
    <property type="evidence" value="ECO:0007669"/>
    <property type="project" value="UniProtKB-UniRule"/>
</dbReference>
<dbReference type="GO" id="GO:0009236">
    <property type="term" value="P:cobalamin biosynthetic process"/>
    <property type="evidence" value="ECO:0007669"/>
    <property type="project" value="UniProtKB-UniRule"/>
</dbReference>
<dbReference type="HAMAP" id="MF_00719">
    <property type="entry name" value="CobS"/>
    <property type="match status" value="1"/>
</dbReference>
<dbReference type="InterPro" id="IPR003805">
    <property type="entry name" value="CobS"/>
</dbReference>
<dbReference type="NCBIfam" id="TIGR00317">
    <property type="entry name" value="cobS"/>
    <property type="match status" value="1"/>
</dbReference>
<dbReference type="NCBIfam" id="NF001278">
    <property type="entry name" value="PRK00235.1-5"/>
    <property type="match status" value="1"/>
</dbReference>
<dbReference type="PANTHER" id="PTHR34148">
    <property type="entry name" value="ADENOSYLCOBINAMIDE-GDP RIBAZOLETRANSFERASE"/>
    <property type="match status" value="1"/>
</dbReference>
<dbReference type="PANTHER" id="PTHR34148:SF1">
    <property type="entry name" value="ADENOSYLCOBINAMIDE-GDP RIBAZOLETRANSFERASE"/>
    <property type="match status" value="1"/>
</dbReference>
<dbReference type="Pfam" id="PF02654">
    <property type="entry name" value="CobS"/>
    <property type="match status" value="1"/>
</dbReference>
<reference key="1">
    <citation type="journal article" date="2008" name="Antimicrob. Agents Chemother.">
        <title>Whole-genome pyrosequencing of an epidemic multidrug-resistant Acinetobacter baumannii strain belonging to the European clone II group.</title>
        <authorList>
            <person name="Iacono M."/>
            <person name="Villa L."/>
            <person name="Fortini D."/>
            <person name="Bordoni R."/>
            <person name="Imperi F."/>
            <person name="Bonnal R.J."/>
            <person name="Sicheritz-Ponten T."/>
            <person name="De Bellis G."/>
            <person name="Visca P."/>
            <person name="Cassone A."/>
            <person name="Carattoli A."/>
        </authorList>
    </citation>
    <scope>NUCLEOTIDE SEQUENCE [LARGE SCALE GENOMIC DNA]</scope>
    <source>
        <strain>ACICU</strain>
    </source>
</reference>
<accession>B2HZL6</accession>
<gene>
    <name evidence="1" type="primary">cobS</name>
    <name type="ordered locus">ACICU_01690</name>
</gene>